<protein>
    <recommendedName>
        <fullName evidence="1">Chaperone protein DnaK</fullName>
    </recommendedName>
    <alternativeName>
        <fullName evidence="1">HSP70</fullName>
    </alternativeName>
    <alternativeName>
        <fullName evidence="1">Heat shock 70 kDa protein</fullName>
    </alternativeName>
    <alternativeName>
        <fullName evidence="1">Heat shock protein 70</fullName>
    </alternativeName>
</protein>
<comment type="function">
    <text evidence="1">Acts as a chaperone.</text>
</comment>
<comment type="induction">
    <text evidence="1">By stress conditions e.g. heat shock.</text>
</comment>
<comment type="similarity">
    <text evidence="1">Belongs to the heat shock protein 70 family.</text>
</comment>
<organism>
    <name type="scientific">Bacteroides fragilis (strain ATCC 25285 / DSM 2151 / CCUG 4856 / JCM 11019 / LMG 10263 / NCTC 9343 / Onslow / VPI 2553 / EN-2)</name>
    <dbReference type="NCBI Taxonomy" id="272559"/>
    <lineage>
        <taxon>Bacteria</taxon>
        <taxon>Pseudomonadati</taxon>
        <taxon>Bacteroidota</taxon>
        <taxon>Bacteroidia</taxon>
        <taxon>Bacteroidales</taxon>
        <taxon>Bacteroidaceae</taxon>
        <taxon>Bacteroides</taxon>
    </lineage>
</organism>
<keyword id="KW-0067">ATP-binding</keyword>
<keyword id="KW-0143">Chaperone</keyword>
<keyword id="KW-0547">Nucleotide-binding</keyword>
<keyword id="KW-0597">Phosphoprotein</keyword>
<keyword id="KW-0346">Stress response</keyword>
<gene>
    <name evidence="1" type="primary">dnaK</name>
    <name type="ordered locus">BF1189</name>
</gene>
<accession>Q5LG30</accession>
<evidence type="ECO:0000255" key="1">
    <source>
        <dbReference type="HAMAP-Rule" id="MF_00332"/>
    </source>
</evidence>
<evidence type="ECO:0000256" key="2">
    <source>
        <dbReference type="SAM" id="MobiDB-lite"/>
    </source>
</evidence>
<reference key="1">
    <citation type="journal article" date="2005" name="Science">
        <title>Extensive DNA inversions in the B. fragilis genome control variable gene expression.</title>
        <authorList>
            <person name="Cerdeno-Tarraga A.-M."/>
            <person name="Patrick S."/>
            <person name="Crossman L.C."/>
            <person name="Blakely G."/>
            <person name="Abratt V."/>
            <person name="Lennard N."/>
            <person name="Poxton I."/>
            <person name="Duerden B."/>
            <person name="Harris B."/>
            <person name="Quail M.A."/>
            <person name="Barron A."/>
            <person name="Clark L."/>
            <person name="Corton C."/>
            <person name="Doggett J."/>
            <person name="Holden M.T.G."/>
            <person name="Larke N."/>
            <person name="Line A."/>
            <person name="Lord A."/>
            <person name="Norbertczak H."/>
            <person name="Ormond D."/>
            <person name="Price C."/>
            <person name="Rabbinowitsch E."/>
            <person name="Woodward J."/>
            <person name="Barrell B.G."/>
            <person name="Parkhill J."/>
        </authorList>
    </citation>
    <scope>NUCLEOTIDE SEQUENCE [LARGE SCALE GENOMIC DNA]</scope>
    <source>
        <strain>ATCC 25285 / DSM 2151 / CCUG 4856 / JCM 11019 / LMG 10263 / NCTC 9343 / Onslow / VPI 2553 / EN-2</strain>
    </source>
</reference>
<proteinExistence type="inferred from homology"/>
<feature type="chain" id="PRO_0000225937" description="Chaperone protein DnaK">
    <location>
        <begin position="1"/>
        <end position="639"/>
    </location>
</feature>
<feature type="region of interest" description="Disordered" evidence="2">
    <location>
        <begin position="600"/>
        <end position="639"/>
    </location>
</feature>
<feature type="compositionally biased region" description="Low complexity" evidence="2">
    <location>
        <begin position="613"/>
        <end position="624"/>
    </location>
</feature>
<feature type="compositionally biased region" description="Acidic residues" evidence="2">
    <location>
        <begin position="629"/>
        <end position="639"/>
    </location>
</feature>
<feature type="modified residue" description="Phosphothreonine; by autocatalysis" evidence="1">
    <location>
        <position position="197"/>
    </location>
</feature>
<name>DNAK_BACFN</name>
<dbReference type="EMBL" id="CR626927">
    <property type="protein sequence ID" value="CAH06911.1"/>
    <property type="molecule type" value="Genomic_DNA"/>
</dbReference>
<dbReference type="RefSeq" id="WP_005785809.1">
    <property type="nucleotide sequence ID" value="NZ_UFTH01000001.1"/>
</dbReference>
<dbReference type="SMR" id="Q5LG30"/>
<dbReference type="PaxDb" id="272559-BF9343_1130"/>
<dbReference type="GeneID" id="60367790"/>
<dbReference type="KEGG" id="bfs:BF9343_1130"/>
<dbReference type="eggNOG" id="COG0443">
    <property type="taxonomic scope" value="Bacteria"/>
</dbReference>
<dbReference type="HOGENOM" id="CLU_005965_2_1_10"/>
<dbReference type="Proteomes" id="UP000006731">
    <property type="component" value="Chromosome"/>
</dbReference>
<dbReference type="GO" id="GO:0005524">
    <property type="term" value="F:ATP binding"/>
    <property type="evidence" value="ECO:0007669"/>
    <property type="project" value="UniProtKB-UniRule"/>
</dbReference>
<dbReference type="GO" id="GO:0140662">
    <property type="term" value="F:ATP-dependent protein folding chaperone"/>
    <property type="evidence" value="ECO:0007669"/>
    <property type="project" value="InterPro"/>
</dbReference>
<dbReference type="GO" id="GO:0051082">
    <property type="term" value="F:unfolded protein binding"/>
    <property type="evidence" value="ECO:0007669"/>
    <property type="project" value="InterPro"/>
</dbReference>
<dbReference type="CDD" id="cd10234">
    <property type="entry name" value="ASKHA_NBD_HSP70_DnaK-like"/>
    <property type="match status" value="1"/>
</dbReference>
<dbReference type="FunFam" id="2.60.34.10:FF:000014">
    <property type="entry name" value="Chaperone protein DnaK HSP70"/>
    <property type="match status" value="1"/>
</dbReference>
<dbReference type="FunFam" id="1.20.1270.10:FF:000001">
    <property type="entry name" value="Molecular chaperone DnaK"/>
    <property type="match status" value="1"/>
</dbReference>
<dbReference type="FunFam" id="3.30.420.40:FF:000004">
    <property type="entry name" value="Molecular chaperone DnaK"/>
    <property type="match status" value="1"/>
</dbReference>
<dbReference type="FunFam" id="3.90.640.10:FF:000003">
    <property type="entry name" value="Molecular chaperone DnaK"/>
    <property type="match status" value="1"/>
</dbReference>
<dbReference type="Gene3D" id="1.20.1270.10">
    <property type="match status" value="1"/>
</dbReference>
<dbReference type="Gene3D" id="3.30.420.40">
    <property type="match status" value="2"/>
</dbReference>
<dbReference type="Gene3D" id="3.90.640.10">
    <property type="entry name" value="Actin, Chain A, domain 4"/>
    <property type="match status" value="1"/>
</dbReference>
<dbReference type="Gene3D" id="2.60.34.10">
    <property type="entry name" value="Substrate Binding Domain Of DNAk, Chain A, domain 1"/>
    <property type="match status" value="1"/>
</dbReference>
<dbReference type="HAMAP" id="MF_00332">
    <property type="entry name" value="DnaK"/>
    <property type="match status" value="1"/>
</dbReference>
<dbReference type="InterPro" id="IPR043129">
    <property type="entry name" value="ATPase_NBD"/>
</dbReference>
<dbReference type="InterPro" id="IPR012725">
    <property type="entry name" value="Chaperone_DnaK"/>
</dbReference>
<dbReference type="InterPro" id="IPR018181">
    <property type="entry name" value="Heat_shock_70_CS"/>
</dbReference>
<dbReference type="InterPro" id="IPR029048">
    <property type="entry name" value="HSP70_C_sf"/>
</dbReference>
<dbReference type="InterPro" id="IPR029047">
    <property type="entry name" value="HSP70_peptide-bd_sf"/>
</dbReference>
<dbReference type="InterPro" id="IPR013126">
    <property type="entry name" value="Hsp_70_fam"/>
</dbReference>
<dbReference type="NCBIfam" id="NF001413">
    <property type="entry name" value="PRK00290.1"/>
    <property type="match status" value="1"/>
</dbReference>
<dbReference type="NCBIfam" id="NF003520">
    <property type="entry name" value="PRK05183.1"/>
    <property type="match status" value="1"/>
</dbReference>
<dbReference type="NCBIfam" id="TIGR02350">
    <property type="entry name" value="prok_dnaK"/>
    <property type="match status" value="1"/>
</dbReference>
<dbReference type="PANTHER" id="PTHR19375">
    <property type="entry name" value="HEAT SHOCK PROTEIN 70KDA"/>
    <property type="match status" value="1"/>
</dbReference>
<dbReference type="Pfam" id="PF00012">
    <property type="entry name" value="HSP70"/>
    <property type="match status" value="1"/>
</dbReference>
<dbReference type="PRINTS" id="PR00301">
    <property type="entry name" value="HEATSHOCK70"/>
</dbReference>
<dbReference type="SUPFAM" id="SSF53067">
    <property type="entry name" value="Actin-like ATPase domain"/>
    <property type="match status" value="2"/>
</dbReference>
<dbReference type="SUPFAM" id="SSF100934">
    <property type="entry name" value="Heat shock protein 70kD (HSP70), C-terminal subdomain"/>
    <property type="match status" value="1"/>
</dbReference>
<dbReference type="SUPFAM" id="SSF100920">
    <property type="entry name" value="Heat shock protein 70kD (HSP70), peptide-binding domain"/>
    <property type="match status" value="1"/>
</dbReference>
<dbReference type="PROSITE" id="PS00297">
    <property type="entry name" value="HSP70_1"/>
    <property type="match status" value="1"/>
</dbReference>
<dbReference type="PROSITE" id="PS00329">
    <property type="entry name" value="HSP70_2"/>
    <property type="match status" value="1"/>
</dbReference>
<dbReference type="PROSITE" id="PS01036">
    <property type="entry name" value="HSP70_3"/>
    <property type="match status" value="1"/>
</dbReference>
<sequence>MGKIIGIDLGTTNSCVSVFEGNEPVVIANSEGKRTTPSIVAFVDGGERKVGDPAKRQAITNPTRTIFSIKRFMGENWDQVQKEIARVPYKVVKGDNNTPRVDIDGRLYTPQEISAMILQKMKKTAEDYLGQEVTEAVITVPAYFSDSQRQATKEAGQIAGLEVKRIVNEPTAAALAYGLDKAHKDMKIAVFDLGGGTFDISILEFGGGVFEVLSTNGDTHLGGDDFDQVIIDWLVQEFKNDEGADLTQDPMAMQRLKEAAEKAKIELSSSTSTEINLPYIMPVGGVPKHLVKTLTRAKFESLAHNLIQACLEPCKKAMQDAGLSNSDIDEVILVGGSSRIPAVQKLVEDFFGKTPSKGVNPDEVVAVGAAVQGAVLTDEIKGVVLLDVTPLSMGIETLGGVMTKLIDANTTIPARKSETFSTAADNQTEVTIHVLQGERPMAAQNKSIGQFNLTGIAPARRGVPQIEVTFDIDANGILKVSAKDKATGKEQAIRIEASSGLSKEEIEKMKAEAEANAEADKKEREKIDKLNQADSLIFQTETQLKELGDKLPADKKAPIEAALQKLKDAHKAQDMTTIDSAMAELNTAFQAASAEMYAQSGAQGGAQAGPDMNAGQSNAGQNNGKQDDNVQDADFEEVK</sequence>